<reference key="1">
    <citation type="submission" date="2008-04" db="EMBL/GenBank/DDBJ databases">
        <title>Complete sequence of chromosome 1 of Burkholderia ambifaria MC40-6.</title>
        <authorList>
            <person name="Copeland A."/>
            <person name="Lucas S."/>
            <person name="Lapidus A."/>
            <person name="Glavina del Rio T."/>
            <person name="Dalin E."/>
            <person name="Tice H."/>
            <person name="Pitluck S."/>
            <person name="Chain P."/>
            <person name="Malfatti S."/>
            <person name="Shin M."/>
            <person name="Vergez L."/>
            <person name="Lang D."/>
            <person name="Schmutz J."/>
            <person name="Larimer F."/>
            <person name="Land M."/>
            <person name="Hauser L."/>
            <person name="Kyrpides N."/>
            <person name="Lykidis A."/>
            <person name="Ramette A."/>
            <person name="Konstantinidis K."/>
            <person name="Tiedje J."/>
            <person name="Richardson P."/>
        </authorList>
    </citation>
    <scope>NUCLEOTIDE SEQUENCE [LARGE SCALE GENOMIC DNA]</scope>
    <source>
        <strain>MC40-6</strain>
    </source>
</reference>
<keyword id="KW-0342">GTP-binding</keyword>
<keyword id="KW-0547">Nucleotide-binding</keyword>
<keyword id="KW-0677">Repeat</keyword>
<keyword id="KW-0690">Ribosome biogenesis</keyword>
<proteinExistence type="inferred from homology"/>
<comment type="function">
    <text evidence="1">GTPase that plays an essential role in the late steps of ribosome biogenesis.</text>
</comment>
<comment type="subunit">
    <text evidence="1">Associates with the 50S ribosomal subunit.</text>
</comment>
<comment type="similarity">
    <text evidence="1">Belongs to the TRAFAC class TrmE-Era-EngA-EngB-Septin-like GTPase superfamily. EngA (Der) GTPase family.</text>
</comment>
<dbReference type="EMBL" id="CP001025">
    <property type="protein sequence ID" value="ACB64204.1"/>
    <property type="molecule type" value="Genomic_DNA"/>
</dbReference>
<dbReference type="RefSeq" id="WP_012363991.1">
    <property type="nucleotide sequence ID" value="NC_010551.1"/>
</dbReference>
<dbReference type="SMR" id="B1YR40"/>
<dbReference type="KEGG" id="bac:BamMC406_1719"/>
<dbReference type="HOGENOM" id="CLU_016077_6_2_4"/>
<dbReference type="OrthoDB" id="9805918at2"/>
<dbReference type="Proteomes" id="UP000001680">
    <property type="component" value="Chromosome 1"/>
</dbReference>
<dbReference type="GO" id="GO:0016887">
    <property type="term" value="F:ATP hydrolysis activity"/>
    <property type="evidence" value="ECO:0007669"/>
    <property type="project" value="InterPro"/>
</dbReference>
<dbReference type="GO" id="GO:0005525">
    <property type="term" value="F:GTP binding"/>
    <property type="evidence" value="ECO:0007669"/>
    <property type="project" value="UniProtKB-UniRule"/>
</dbReference>
<dbReference type="GO" id="GO:0043022">
    <property type="term" value="F:ribosome binding"/>
    <property type="evidence" value="ECO:0007669"/>
    <property type="project" value="TreeGrafter"/>
</dbReference>
<dbReference type="GO" id="GO:0042254">
    <property type="term" value="P:ribosome biogenesis"/>
    <property type="evidence" value="ECO:0007669"/>
    <property type="project" value="UniProtKB-KW"/>
</dbReference>
<dbReference type="CDD" id="cd01894">
    <property type="entry name" value="EngA1"/>
    <property type="match status" value="1"/>
</dbReference>
<dbReference type="CDD" id="cd01895">
    <property type="entry name" value="EngA2"/>
    <property type="match status" value="1"/>
</dbReference>
<dbReference type="FunFam" id="3.30.300.20:FF:000004">
    <property type="entry name" value="GTPase Der"/>
    <property type="match status" value="1"/>
</dbReference>
<dbReference type="FunFam" id="3.40.50.300:FF:000040">
    <property type="entry name" value="GTPase Der"/>
    <property type="match status" value="1"/>
</dbReference>
<dbReference type="FunFam" id="3.40.50.300:FF:000057">
    <property type="entry name" value="GTPase Der"/>
    <property type="match status" value="1"/>
</dbReference>
<dbReference type="Gene3D" id="3.30.300.20">
    <property type="match status" value="1"/>
</dbReference>
<dbReference type="Gene3D" id="3.40.50.300">
    <property type="entry name" value="P-loop containing nucleotide triphosphate hydrolases"/>
    <property type="match status" value="2"/>
</dbReference>
<dbReference type="HAMAP" id="MF_00195">
    <property type="entry name" value="GTPase_Der"/>
    <property type="match status" value="1"/>
</dbReference>
<dbReference type="InterPro" id="IPR003593">
    <property type="entry name" value="AAA+_ATPase"/>
</dbReference>
<dbReference type="InterPro" id="IPR031166">
    <property type="entry name" value="G_ENGA"/>
</dbReference>
<dbReference type="InterPro" id="IPR006073">
    <property type="entry name" value="GTP-bd"/>
</dbReference>
<dbReference type="InterPro" id="IPR016484">
    <property type="entry name" value="GTPase_Der"/>
</dbReference>
<dbReference type="InterPro" id="IPR032859">
    <property type="entry name" value="KH_dom-like"/>
</dbReference>
<dbReference type="InterPro" id="IPR015946">
    <property type="entry name" value="KH_dom-like_a/b"/>
</dbReference>
<dbReference type="InterPro" id="IPR027417">
    <property type="entry name" value="P-loop_NTPase"/>
</dbReference>
<dbReference type="InterPro" id="IPR005225">
    <property type="entry name" value="Small_GTP-bd"/>
</dbReference>
<dbReference type="NCBIfam" id="TIGR03594">
    <property type="entry name" value="GTPase_EngA"/>
    <property type="match status" value="1"/>
</dbReference>
<dbReference type="NCBIfam" id="TIGR00231">
    <property type="entry name" value="small_GTP"/>
    <property type="match status" value="2"/>
</dbReference>
<dbReference type="PANTHER" id="PTHR43834">
    <property type="entry name" value="GTPASE DER"/>
    <property type="match status" value="1"/>
</dbReference>
<dbReference type="PANTHER" id="PTHR43834:SF6">
    <property type="entry name" value="GTPASE DER"/>
    <property type="match status" value="1"/>
</dbReference>
<dbReference type="Pfam" id="PF14714">
    <property type="entry name" value="KH_dom-like"/>
    <property type="match status" value="1"/>
</dbReference>
<dbReference type="Pfam" id="PF01926">
    <property type="entry name" value="MMR_HSR1"/>
    <property type="match status" value="2"/>
</dbReference>
<dbReference type="PIRSF" id="PIRSF006485">
    <property type="entry name" value="GTP-binding_EngA"/>
    <property type="match status" value="1"/>
</dbReference>
<dbReference type="PRINTS" id="PR00326">
    <property type="entry name" value="GTP1OBG"/>
</dbReference>
<dbReference type="SMART" id="SM00382">
    <property type="entry name" value="AAA"/>
    <property type="match status" value="2"/>
</dbReference>
<dbReference type="SUPFAM" id="SSF52540">
    <property type="entry name" value="P-loop containing nucleoside triphosphate hydrolases"/>
    <property type="match status" value="2"/>
</dbReference>
<dbReference type="PROSITE" id="PS51712">
    <property type="entry name" value="G_ENGA"/>
    <property type="match status" value="2"/>
</dbReference>
<evidence type="ECO:0000255" key="1">
    <source>
        <dbReference type="HAMAP-Rule" id="MF_00195"/>
    </source>
</evidence>
<protein>
    <recommendedName>
        <fullName evidence="1">GTPase Der</fullName>
    </recommendedName>
    <alternativeName>
        <fullName evidence="1">GTP-binding protein EngA</fullName>
    </alternativeName>
</protein>
<feature type="chain" id="PRO_1000099094" description="GTPase Der">
    <location>
        <begin position="1"/>
        <end position="445"/>
    </location>
</feature>
<feature type="domain" description="EngA-type G 1">
    <location>
        <begin position="3"/>
        <end position="167"/>
    </location>
</feature>
<feature type="domain" description="EngA-type G 2">
    <location>
        <begin position="180"/>
        <end position="353"/>
    </location>
</feature>
<feature type="domain" description="KH-like" evidence="1">
    <location>
        <begin position="354"/>
        <end position="438"/>
    </location>
</feature>
<feature type="binding site" evidence="1">
    <location>
        <begin position="9"/>
        <end position="16"/>
    </location>
    <ligand>
        <name>GTP</name>
        <dbReference type="ChEBI" id="CHEBI:37565"/>
        <label>1</label>
    </ligand>
</feature>
<feature type="binding site" evidence="1">
    <location>
        <begin position="56"/>
        <end position="60"/>
    </location>
    <ligand>
        <name>GTP</name>
        <dbReference type="ChEBI" id="CHEBI:37565"/>
        <label>1</label>
    </ligand>
</feature>
<feature type="binding site" evidence="1">
    <location>
        <begin position="119"/>
        <end position="122"/>
    </location>
    <ligand>
        <name>GTP</name>
        <dbReference type="ChEBI" id="CHEBI:37565"/>
        <label>1</label>
    </ligand>
</feature>
<feature type="binding site" evidence="1">
    <location>
        <begin position="186"/>
        <end position="193"/>
    </location>
    <ligand>
        <name>GTP</name>
        <dbReference type="ChEBI" id="CHEBI:37565"/>
        <label>2</label>
    </ligand>
</feature>
<feature type="binding site" evidence="1">
    <location>
        <begin position="233"/>
        <end position="237"/>
    </location>
    <ligand>
        <name>GTP</name>
        <dbReference type="ChEBI" id="CHEBI:37565"/>
        <label>2</label>
    </ligand>
</feature>
<feature type="binding site" evidence="1">
    <location>
        <begin position="298"/>
        <end position="301"/>
    </location>
    <ligand>
        <name>GTP</name>
        <dbReference type="ChEBI" id="CHEBI:37565"/>
        <label>2</label>
    </ligand>
</feature>
<accession>B1YR40</accession>
<sequence>MKPVIALVGRPNVGKSTLFNRLTRSRDALVADLPGLTRDRHYGEGRVGERPYLVVDTGGFEPVAKDGILHQMARQTRQAVEEADVVVFIVDGRNGLAPQDKSIADYLRKTGRPIFLVVNKAEGMKYTAVATDFYELGLGDPRAISAAHGDGVTDMINEALEVAYAGQPEEADDDDPSRGIKIAIVGRPNVGKSTLVNALIGEDRVIAFDMPGTTRDSIYVDFERNGKKYTLIDTAGLRRRGKVFEAIEKFSVVKTLQSISDANVVILLLDAQQDISDQDAHIAGFVVEQGRALVIGVNKWDGLDDHARDRAKADLTRKLKFLDFAKSHYISAAKKTGIGALMRSVDDAYAAAMAKLPTPKLTRALIEAVEFQQPRRRGPVRPKLRYAHQGGQNPPLIVIHGNALDAVTDTYKRYLENRFRETFSLTGTPLRIEFRSSNNPYADKG</sequence>
<name>DER_BURA4</name>
<gene>
    <name evidence="1" type="primary">der</name>
    <name type="synonym">engA</name>
    <name type="ordered locus">BamMC406_1719</name>
</gene>
<organism>
    <name type="scientific">Burkholderia ambifaria (strain MC40-6)</name>
    <dbReference type="NCBI Taxonomy" id="398577"/>
    <lineage>
        <taxon>Bacteria</taxon>
        <taxon>Pseudomonadati</taxon>
        <taxon>Pseudomonadota</taxon>
        <taxon>Betaproteobacteria</taxon>
        <taxon>Burkholderiales</taxon>
        <taxon>Burkholderiaceae</taxon>
        <taxon>Burkholderia</taxon>
        <taxon>Burkholderia cepacia complex</taxon>
    </lineage>
</organism>